<feature type="chain" id="PRO_0000142436" description="Adenine deaminase">
    <location>
        <begin position="1"/>
        <end position="588"/>
    </location>
</feature>
<keyword id="KW-0378">Hydrolase</keyword>
<keyword id="KW-0464">Manganese</keyword>
<keyword id="KW-1185">Reference proteome</keyword>
<protein>
    <recommendedName>
        <fullName evidence="1">Adenine deaminase</fullName>
        <shortName evidence="1">Adenase</shortName>
        <shortName evidence="1">Adenine aminase</shortName>
        <ecNumber evidence="1">3.5.4.2</ecNumber>
    </recommendedName>
</protein>
<accession>Q7BZ90</accession>
<accession>Q83MJ4</accession>
<sequence>MNNSINHKFHHISRAEYQELLAVSRGDAVADYIIDNVSILDLINAGEISGPIVIKGRYIAGVGAEYADTPALQRIDARGATAVPGFIDAHLHIESSMMTPVTFETATLPRGLTTVICDPHEIVNVMGEAGFAWFARCAEQARQNQYLQVSSCVPALEGCDVNGASFTLEQMLAWRDHPQVTGLAEMMDYPGVINGQNALLDKLDAFRYLTLDGHCPGLGGKELNAYIAAGIENCHESYQLEEGRRKLQLGMSLMIREGSAASNLNALAPLINEFNSPQCMLCTDDRNPWEIAHEGHIDALIRRLIEQHNVPLHVAYRVASWSTARHFGLNHLGLLAPGKQADIVLLSDARKVTVQQVLVKGEPIDAQTLQAEESARLALSAPPYGNTIARQPVSASDFALQFTPGKRYRVIDVIHNELITHSRSSVYSENGFDRDDVCFIAVLERYGQRLAPACGLLGGFGLNEGALAATVSHDSHNIVVIGRSAEEMALAVNQVIQDGGGLCVVRNGQVQSHLPLPIAGLMSTDTAQSLAEQIDALKAAARECGPLPDEPFIQMAFLSLPVIPALKLTSQGLFDGEKFAFTTLEVTE</sequence>
<proteinExistence type="inferred from homology"/>
<evidence type="ECO:0000255" key="1">
    <source>
        <dbReference type="HAMAP-Rule" id="MF_01518"/>
    </source>
</evidence>
<name>ADEC_SHIFL</name>
<organism>
    <name type="scientific">Shigella flexneri</name>
    <dbReference type="NCBI Taxonomy" id="623"/>
    <lineage>
        <taxon>Bacteria</taxon>
        <taxon>Pseudomonadati</taxon>
        <taxon>Pseudomonadota</taxon>
        <taxon>Gammaproteobacteria</taxon>
        <taxon>Enterobacterales</taxon>
        <taxon>Enterobacteriaceae</taxon>
        <taxon>Shigella</taxon>
    </lineage>
</organism>
<comment type="catalytic activity">
    <reaction evidence="1">
        <text>adenine + H2O + H(+) = hypoxanthine + NH4(+)</text>
        <dbReference type="Rhea" id="RHEA:23688"/>
        <dbReference type="ChEBI" id="CHEBI:15377"/>
        <dbReference type="ChEBI" id="CHEBI:15378"/>
        <dbReference type="ChEBI" id="CHEBI:16708"/>
        <dbReference type="ChEBI" id="CHEBI:17368"/>
        <dbReference type="ChEBI" id="CHEBI:28938"/>
        <dbReference type="EC" id="3.5.4.2"/>
    </reaction>
</comment>
<comment type="cofactor">
    <cofactor evidence="1">
        <name>Mn(2+)</name>
        <dbReference type="ChEBI" id="CHEBI:29035"/>
    </cofactor>
</comment>
<comment type="subunit">
    <text evidence="1">Homodimer.</text>
</comment>
<comment type="similarity">
    <text evidence="1">Belongs to the metallo-dependent hydrolases superfamily. Adenine deaminase family.</text>
</comment>
<gene>
    <name evidence="1" type="primary">ade</name>
    <name type="ordered locus">SF3796</name>
    <name type="ordered locus">S3972</name>
</gene>
<dbReference type="EC" id="3.5.4.2" evidence="1"/>
<dbReference type="EMBL" id="AE005674">
    <property type="protein sequence ID" value="AAN45236.1"/>
    <property type="molecule type" value="Genomic_DNA"/>
</dbReference>
<dbReference type="EMBL" id="AE014073">
    <property type="protein sequence ID" value="AAP18960.1"/>
    <property type="molecule type" value="Genomic_DNA"/>
</dbReference>
<dbReference type="SMR" id="Q7BZ90"/>
<dbReference type="STRING" id="198214.SF3796"/>
<dbReference type="PaxDb" id="198214-SF3796"/>
<dbReference type="KEGG" id="sfl:SF3796"/>
<dbReference type="KEGG" id="sfx:S3972"/>
<dbReference type="PATRIC" id="fig|198214.7.peg.4481"/>
<dbReference type="HOGENOM" id="CLU_027935_0_0_6"/>
<dbReference type="Proteomes" id="UP000001006">
    <property type="component" value="Chromosome"/>
</dbReference>
<dbReference type="Proteomes" id="UP000002673">
    <property type="component" value="Chromosome"/>
</dbReference>
<dbReference type="GO" id="GO:0000034">
    <property type="term" value="F:adenine deaminase activity"/>
    <property type="evidence" value="ECO:0007669"/>
    <property type="project" value="UniProtKB-UniRule"/>
</dbReference>
<dbReference type="GO" id="GO:0006146">
    <property type="term" value="P:adenine catabolic process"/>
    <property type="evidence" value="ECO:0007669"/>
    <property type="project" value="InterPro"/>
</dbReference>
<dbReference type="CDD" id="cd01295">
    <property type="entry name" value="AdeC"/>
    <property type="match status" value="1"/>
</dbReference>
<dbReference type="FunFam" id="3.20.20.140:FF:000016">
    <property type="entry name" value="Adenine deaminase"/>
    <property type="match status" value="1"/>
</dbReference>
<dbReference type="Gene3D" id="3.20.20.140">
    <property type="entry name" value="Metal-dependent hydrolases"/>
    <property type="match status" value="1"/>
</dbReference>
<dbReference type="Gene3D" id="2.30.40.10">
    <property type="entry name" value="Urease, subunit C, domain 1"/>
    <property type="match status" value="1"/>
</dbReference>
<dbReference type="HAMAP" id="MF_01518">
    <property type="entry name" value="Adenine_deamin"/>
    <property type="match status" value="1"/>
</dbReference>
<dbReference type="InterPro" id="IPR006679">
    <property type="entry name" value="Adenine_deam"/>
</dbReference>
<dbReference type="InterPro" id="IPR026912">
    <property type="entry name" value="Adenine_deam_C"/>
</dbReference>
<dbReference type="InterPro" id="IPR006680">
    <property type="entry name" value="Amidohydro-rel"/>
</dbReference>
<dbReference type="InterPro" id="IPR011059">
    <property type="entry name" value="Metal-dep_hydrolase_composite"/>
</dbReference>
<dbReference type="InterPro" id="IPR032466">
    <property type="entry name" value="Metal_Hydrolase"/>
</dbReference>
<dbReference type="NCBIfam" id="TIGR01178">
    <property type="entry name" value="ade"/>
    <property type="match status" value="1"/>
</dbReference>
<dbReference type="NCBIfam" id="NF007457">
    <property type="entry name" value="PRK10027.1"/>
    <property type="match status" value="1"/>
</dbReference>
<dbReference type="PANTHER" id="PTHR11113:SF2">
    <property type="entry name" value="ADENINE DEAMINASE"/>
    <property type="match status" value="1"/>
</dbReference>
<dbReference type="PANTHER" id="PTHR11113">
    <property type="entry name" value="N-ACETYLGLUCOSAMINE-6-PHOSPHATE DEACETYLASE"/>
    <property type="match status" value="1"/>
</dbReference>
<dbReference type="Pfam" id="PF13382">
    <property type="entry name" value="Adenine_deam_C"/>
    <property type="match status" value="1"/>
</dbReference>
<dbReference type="Pfam" id="PF01979">
    <property type="entry name" value="Amidohydro_1"/>
    <property type="match status" value="1"/>
</dbReference>
<dbReference type="SUPFAM" id="SSF51338">
    <property type="entry name" value="Composite domain of metallo-dependent hydrolases"/>
    <property type="match status" value="1"/>
</dbReference>
<dbReference type="SUPFAM" id="SSF51556">
    <property type="entry name" value="Metallo-dependent hydrolases"/>
    <property type="match status" value="1"/>
</dbReference>
<reference key="1">
    <citation type="journal article" date="2002" name="Nucleic Acids Res.">
        <title>Genome sequence of Shigella flexneri 2a: insights into pathogenicity through comparison with genomes of Escherichia coli K12 and O157.</title>
        <authorList>
            <person name="Jin Q."/>
            <person name="Yuan Z."/>
            <person name="Xu J."/>
            <person name="Wang Y."/>
            <person name="Shen Y."/>
            <person name="Lu W."/>
            <person name="Wang J."/>
            <person name="Liu H."/>
            <person name="Yang J."/>
            <person name="Yang F."/>
            <person name="Zhang X."/>
            <person name="Zhang J."/>
            <person name="Yang G."/>
            <person name="Wu H."/>
            <person name="Qu D."/>
            <person name="Dong J."/>
            <person name="Sun L."/>
            <person name="Xue Y."/>
            <person name="Zhao A."/>
            <person name="Gao Y."/>
            <person name="Zhu J."/>
            <person name="Kan B."/>
            <person name="Ding K."/>
            <person name="Chen S."/>
            <person name="Cheng H."/>
            <person name="Yao Z."/>
            <person name="He B."/>
            <person name="Chen R."/>
            <person name="Ma D."/>
            <person name="Qiang B."/>
            <person name="Wen Y."/>
            <person name="Hou Y."/>
            <person name="Yu J."/>
        </authorList>
    </citation>
    <scope>NUCLEOTIDE SEQUENCE [LARGE SCALE GENOMIC DNA]</scope>
    <source>
        <strain>301 / Serotype 2a</strain>
    </source>
</reference>
<reference key="2">
    <citation type="journal article" date="2003" name="Infect. Immun.">
        <title>Complete genome sequence and comparative genomics of Shigella flexneri serotype 2a strain 2457T.</title>
        <authorList>
            <person name="Wei J."/>
            <person name="Goldberg M.B."/>
            <person name="Burland V."/>
            <person name="Venkatesan M.M."/>
            <person name="Deng W."/>
            <person name="Fournier G."/>
            <person name="Mayhew G.F."/>
            <person name="Plunkett G. III"/>
            <person name="Rose D.J."/>
            <person name="Darling A."/>
            <person name="Mau B."/>
            <person name="Perna N.T."/>
            <person name="Payne S.M."/>
            <person name="Runyen-Janecky L.J."/>
            <person name="Zhou S."/>
            <person name="Schwartz D.C."/>
            <person name="Blattner F.R."/>
        </authorList>
    </citation>
    <scope>NUCLEOTIDE SEQUENCE [LARGE SCALE GENOMIC DNA]</scope>
    <source>
        <strain>ATCC 700930 / 2457T / Serotype 2a</strain>
    </source>
</reference>